<name>COBQ_RHIWR</name>
<organism>
    <name type="scientific">Rhizorhabdus wittichii (strain DSM 6014 / CCUG 31198 / JCM 15750 / NBRC 105917 / EY 4224 / RW1)</name>
    <name type="common">Sphingomonas wittichii</name>
    <dbReference type="NCBI Taxonomy" id="392499"/>
    <lineage>
        <taxon>Bacteria</taxon>
        <taxon>Pseudomonadati</taxon>
        <taxon>Pseudomonadota</taxon>
        <taxon>Alphaproteobacteria</taxon>
        <taxon>Sphingomonadales</taxon>
        <taxon>Sphingomonadaceae</taxon>
        <taxon>Rhizorhabdus</taxon>
    </lineage>
</organism>
<gene>
    <name evidence="1" type="primary">cobQ</name>
    <name type="ordered locus">Swit_4734</name>
</gene>
<evidence type="ECO:0000255" key="1">
    <source>
        <dbReference type="HAMAP-Rule" id="MF_00028"/>
    </source>
</evidence>
<protein>
    <recommendedName>
        <fullName evidence="1">Cobyric acid synthase</fullName>
    </recommendedName>
</protein>
<sequence length="485" mass="51120">MGAVMLQGTGSDVGKSVLVAGLCRAFVRRGLAVRPFKPQNMSNNAAVTIDGGEIGRAQALQAIACRVEPHSDMNPVLLKPQADRTSQLVVHGRVRGTLGSADFREARRPLLDEVLASYRRLREQCDIVVVEGAGSPAEINLRAGDIANMGFARAAGVPVVLVGDIDRGGVIAAVVGTRAVLDPADAAMIHGFLINKFRGDPALFEDGYRQIEALSGWRGFGVVPWLAATARLPSEDAVILERRGGPAEGRVLVACPILPRISNFDDLDPLKLEPGVELVMVPPGRPIPAEAALIVLPGSKATIADLAALRAEGWDIDIRAHHRRGRAILGLCGGYQMLGRRVADPEGIEGPPGAVDGLGLLDVETRLSPAKTLRRVEGEALDARFDGYEMHVGETDGPGRARPFARFDDGRTDGAIDPGGTVMGSYVHGLLANADLRRALLARLGIEGGGRDYAASVDAALDAIAEEIERHVDVDALVALAQAGG</sequence>
<accession>A5VFK5</accession>
<reference key="1">
    <citation type="journal article" date="2010" name="J. Bacteriol.">
        <title>Genome sequence of the dioxin-mineralizing bacterium Sphingomonas wittichii RW1.</title>
        <authorList>
            <person name="Miller T.R."/>
            <person name="Delcher A.L."/>
            <person name="Salzberg S.L."/>
            <person name="Saunders E."/>
            <person name="Detter J.C."/>
            <person name="Halden R.U."/>
        </authorList>
    </citation>
    <scope>NUCLEOTIDE SEQUENCE [LARGE SCALE GENOMIC DNA]</scope>
    <source>
        <strain>DSM 6014 / CCUG 31198 / JCM 15750 / NBRC 105917 / EY 4224 / RW1</strain>
    </source>
</reference>
<keyword id="KW-0169">Cobalamin biosynthesis</keyword>
<keyword id="KW-0315">Glutamine amidotransferase</keyword>
<keyword id="KW-1185">Reference proteome</keyword>
<dbReference type="EMBL" id="CP000699">
    <property type="protein sequence ID" value="ABQ71071.1"/>
    <property type="molecule type" value="Genomic_DNA"/>
</dbReference>
<dbReference type="SMR" id="A5VFK5"/>
<dbReference type="STRING" id="392499.Swit_4734"/>
<dbReference type="PaxDb" id="392499-Swit_4734"/>
<dbReference type="KEGG" id="swi:Swit_4734"/>
<dbReference type="eggNOG" id="COG1492">
    <property type="taxonomic scope" value="Bacteria"/>
</dbReference>
<dbReference type="HOGENOM" id="CLU_019250_2_2_5"/>
<dbReference type="OrthoDB" id="9808302at2"/>
<dbReference type="UniPathway" id="UPA00148"/>
<dbReference type="Proteomes" id="UP000001989">
    <property type="component" value="Chromosome"/>
</dbReference>
<dbReference type="GO" id="GO:0015420">
    <property type="term" value="F:ABC-type vitamin B12 transporter activity"/>
    <property type="evidence" value="ECO:0007669"/>
    <property type="project" value="UniProtKB-UniRule"/>
</dbReference>
<dbReference type="GO" id="GO:0003824">
    <property type="term" value="F:catalytic activity"/>
    <property type="evidence" value="ECO:0007669"/>
    <property type="project" value="InterPro"/>
</dbReference>
<dbReference type="GO" id="GO:0009236">
    <property type="term" value="P:cobalamin biosynthetic process"/>
    <property type="evidence" value="ECO:0007669"/>
    <property type="project" value="UniProtKB-UniRule"/>
</dbReference>
<dbReference type="CDD" id="cd05389">
    <property type="entry name" value="CobQ_N"/>
    <property type="match status" value="1"/>
</dbReference>
<dbReference type="CDD" id="cd01750">
    <property type="entry name" value="GATase1_CobQ"/>
    <property type="match status" value="1"/>
</dbReference>
<dbReference type="Gene3D" id="3.40.50.880">
    <property type="match status" value="1"/>
</dbReference>
<dbReference type="Gene3D" id="3.40.50.300">
    <property type="entry name" value="P-loop containing nucleotide triphosphate hydrolases"/>
    <property type="match status" value="1"/>
</dbReference>
<dbReference type="HAMAP" id="MF_00028">
    <property type="entry name" value="CobQ"/>
    <property type="match status" value="1"/>
</dbReference>
<dbReference type="InterPro" id="IPR029062">
    <property type="entry name" value="Class_I_gatase-like"/>
</dbReference>
<dbReference type="InterPro" id="IPR002586">
    <property type="entry name" value="CobQ/CobB/MinD/ParA_Nub-bd_dom"/>
</dbReference>
<dbReference type="InterPro" id="IPR033949">
    <property type="entry name" value="CobQ_GATase1"/>
</dbReference>
<dbReference type="InterPro" id="IPR047045">
    <property type="entry name" value="CobQ_N"/>
</dbReference>
<dbReference type="InterPro" id="IPR004459">
    <property type="entry name" value="CobQ_synth"/>
</dbReference>
<dbReference type="InterPro" id="IPR011698">
    <property type="entry name" value="GATase_3"/>
</dbReference>
<dbReference type="InterPro" id="IPR027417">
    <property type="entry name" value="P-loop_NTPase"/>
</dbReference>
<dbReference type="NCBIfam" id="TIGR00313">
    <property type="entry name" value="cobQ"/>
    <property type="match status" value="1"/>
</dbReference>
<dbReference type="NCBIfam" id="NF001989">
    <property type="entry name" value="PRK00784.1"/>
    <property type="match status" value="1"/>
</dbReference>
<dbReference type="PANTHER" id="PTHR21343:SF1">
    <property type="entry name" value="COBYRIC ACID SYNTHASE"/>
    <property type="match status" value="1"/>
</dbReference>
<dbReference type="PANTHER" id="PTHR21343">
    <property type="entry name" value="DETHIOBIOTIN SYNTHETASE"/>
    <property type="match status" value="1"/>
</dbReference>
<dbReference type="Pfam" id="PF01656">
    <property type="entry name" value="CbiA"/>
    <property type="match status" value="1"/>
</dbReference>
<dbReference type="Pfam" id="PF07685">
    <property type="entry name" value="GATase_3"/>
    <property type="match status" value="1"/>
</dbReference>
<dbReference type="SUPFAM" id="SSF52317">
    <property type="entry name" value="Class I glutamine amidotransferase-like"/>
    <property type="match status" value="1"/>
</dbReference>
<dbReference type="SUPFAM" id="SSF52540">
    <property type="entry name" value="P-loop containing nucleoside triphosphate hydrolases"/>
    <property type="match status" value="1"/>
</dbReference>
<dbReference type="PROSITE" id="PS51274">
    <property type="entry name" value="GATASE_COBBQ"/>
    <property type="match status" value="1"/>
</dbReference>
<feature type="chain" id="PRO_0000332389" description="Cobyric acid synthase">
    <location>
        <begin position="1"/>
        <end position="485"/>
    </location>
</feature>
<feature type="domain" description="GATase cobBQ-type" evidence="1">
    <location>
        <begin position="250"/>
        <end position="436"/>
    </location>
</feature>
<feature type="active site" description="Nucleophile" evidence="1">
    <location>
        <position position="332"/>
    </location>
</feature>
<feature type="active site" evidence="1">
    <location>
        <position position="428"/>
    </location>
</feature>
<proteinExistence type="inferred from homology"/>
<comment type="function">
    <text evidence="1">Catalyzes amidations at positions B, D, E, and G on adenosylcobyrinic A,C-diamide. NH(2) groups are provided by glutamine, and one molecule of ATP is hydrogenolyzed for each amidation.</text>
</comment>
<comment type="pathway">
    <text evidence="1">Cofactor biosynthesis; adenosylcobalamin biosynthesis.</text>
</comment>
<comment type="similarity">
    <text evidence="1">Belongs to the CobB/CobQ family. CobQ subfamily.</text>
</comment>